<sequence length="165" mass="18218">MSFASAPTVPTNTSHYADLPAASSALFQAKARRGLTFDQIAKAIGKDEVWLAAAFYGQARFTEDELITVGEVLGIGSSELVSQLGSHWWPNRGLGPMPPTDPVIYRLYESVLVYGHAIKAVIHEKFGDGIMSMIDCKINVERKEDPKGDRVLLTFDGKFLPYARW</sequence>
<feature type="chain" id="PRO_0000403252" description="Cyanate hydratase">
    <location>
        <begin position="1"/>
        <end position="165"/>
    </location>
</feature>
<feature type="active site" evidence="1">
    <location>
        <position position="106"/>
    </location>
</feature>
<feature type="active site" evidence="1">
    <location>
        <position position="109"/>
    </location>
</feature>
<feature type="active site" evidence="1">
    <location>
        <position position="132"/>
    </location>
</feature>
<proteinExistence type="inferred from homology"/>
<organism>
    <name type="scientific">Laccaria bicolor (strain S238N-H82 / ATCC MYA-4686)</name>
    <name type="common">Bicoloured deceiver</name>
    <name type="synonym">Laccaria laccata var. bicolor</name>
    <dbReference type="NCBI Taxonomy" id="486041"/>
    <lineage>
        <taxon>Eukaryota</taxon>
        <taxon>Fungi</taxon>
        <taxon>Dikarya</taxon>
        <taxon>Basidiomycota</taxon>
        <taxon>Agaricomycotina</taxon>
        <taxon>Agaricomycetes</taxon>
        <taxon>Agaricomycetidae</taxon>
        <taxon>Agaricales</taxon>
        <taxon>Agaricineae</taxon>
        <taxon>Hydnangiaceae</taxon>
        <taxon>Laccaria</taxon>
    </lineage>
</organism>
<gene>
    <name evidence="1" type="primary">CYN1</name>
    <name type="ORF">LACBIDRAFT_174676</name>
</gene>
<keyword id="KW-0456">Lyase</keyword>
<keyword id="KW-1185">Reference proteome</keyword>
<comment type="function">
    <text evidence="1">Catalyzes the reaction of cyanate with bicarbonate to produce ammonia and carbon dioxide.</text>
</comment>
<comment type="catalytic activity">
    <reaction evidence="1">
        <text>cyanate + hydrogencarbonate + 3 H(+) = NH4(+) + 2 CO2</text>
        <dbReference type="Rhea" id="RHEA:11120"/>
        <dbReference type="ChEBI" id="CHEBI:15378"/>
        <dbReference type="ChEBI" id="CHEBI:16526"/>
        <dbReference type="ChEBI" id="CHEBI:17544"/>
        <dbReference type="ChEBI" id="CHEBI:28938"/>
        <dbReference type="ChEBI" id="CHEBI:29195"/>
        <dbReference type="EC" id="4.2.1.104"/>
    </reaction>
</comment>
<comment type="similarity">
    <text evidence="1">Belongs to the cyanase family.</text>
</comment>
<reference key="1">
    <citation type="journal article" date="2008" name="Nature">
        <title>The genome of Laccaria bicolor provides insights into mycorrhizal symbiosis.</title>
        <authorList>
            <person name="Martin F."/>
            <person name="Aerts A."/>
            <person name="Ahren D."/>
            <person name="Brun A."/>
            <person name="Danchin E.G.J."/>
            <person name="Duchaussoy F."/>
            <person name="Gibon J."/>
            <person name="Kohler A."/>
            <person name="Lindquist E."/>
            <person name="Pereda V."/>
            <person name="Salamov A."/>
            <person name="Shapiro H.J."/>
            <person name="Wuyts J."/>
            <person name="Blaudez D."/>
            <person name="Buee M."/>
            <person name="Brokstein P."/>
            <person name="Canbaeck B."/>
            <person name="Cohen D."/>
            <person name="Courty P.E."/>
            <person name="Coutinho P.M."/>
            <person name="Delaruelle C."/>
            <person name="Detter J.C."/>
            <person name="Deveau A."/>
            <person name="DiFazio S."/>
            <person name="Duplessis S."/>
            <person name="Fraissinet-Tachet L."/>
            <person name="Lucic E."/>
            <person name="Frey-Klett P."/>
            <person name="Fourrey C."/>
            <person name="Feussner I."/>
            <person name="Gay G."/>
            <person name="Grimwood J."/>
            <person name="Hoegger P.J."/>
            <person name="Jain P."/>
            <person name="Kilaru S."/>
            <person name="Labbe J."/>
            <person name="Lin Y.C."/>
            <person name="Legue V."/>
            <person name="Le Tacon F."/>
            <person name="Marmeisse R."/>
            <person name="Melayah D."/>
            <person name="Montanini B."/>
            <person name="Muratet M."/>
            <person name="Nehls U."/>
            <person name="Niculita-Hirzel H."/>
            <person name="Oudot-Le Secq M.P."/>
            <person name="Peter M."/>
            <person name="Quesneville H."/>
            <person name="Rajashekar B."/>
            <person name="Reich M."/>
            <person name="Rouhier N."/>
            <person name="Schmutz J."/>
            <person name="Yin T."/>
            <person name="Chalot M."/>
            <person name="Henrissat B."/>
            <person name="Kuees U."/>
            <person name="Lucas S."/>
            <person name="Van de Peer Y."/>
            <person name="Podila G.K."/>
            <person name="Polle A."/>
            <person name="Pukkila P.J."/>
            <person name="Richardson P.M."/>
            <person name="Rouze P."/>
            <person name="Sanders I.R."/>
            <person name="Stajich J.E."/>
            <person name="Tunlid A."/>
            <person name="Tuskan G."/>
            <person name="Grigoriev I.V."/>
        </authorList>
    </citation>
    <scope>NUCLEOTIDE SEQUENCE [LARGE SCALE GENOMIC DNA]</scope>
    <source>
        <strain>S238N-H82 / ATCC MYA-4686</strain>
    </source>
</reference>
<name>CYNS_LACBS</name>
<accession>B0DN41</accession>
<protein>
    <recommendedName>
        <fullName evidence="1">Cyanate hydratase</fullName>
        <shortName evidence="1">Cyanase</shortName>
        <ecNumber evidence="1">4.2.1.104</ecNumber>
    </recommendedName>
    <alternativeName>
        <fullName evidence="1">Cyanate hydrolase</fullName>
    </alternativeName>
    <alternativeName>
        <fullName evidence="1">Cyanate lyase</fullName>
    </alternativeName>
</protein>
<dbReference type="EC" id="4.2.1.104" evidence="1"/>
<dbReference type="EMBL" id="DS547120">
    <property type="protein sequence ID" value="EDR03990.1"/>
    <property type="molecule type" value="Genomic_DNA"/>
</dbReference>
<dbReference type="RefSeq" id="XP_001885245.1">
    <property type="nucleotide sequence ID" value="XM_001885210.1"/>
</dbReference>
<dbReference type="SMR" id="B0DN41"/>
<dbReference type="STRING" id="486041.B0DN41"/>
<dbReference type="GeneID" id="6080877"/>
<dbReference type="KEGG" id="lbc:LACBIDRAFT_174676"/>
<dbReference type="HOGENOM" id="CLU_103452_1_0_1"/>
<dbReference type="InParanoid" id="B0DN41"/>
<dbReference type="OrthoDB" id="10019422at2759"/>
<dbReference type="Proteomes" id="UP000001194">
    <property type="component" value="Unassembled WGS sequence"/>
</dbReference>
<dbReference type="GO" id="GO:0008824">
    <property type="term" value="F:cyanate hydratase activity"/>
    <property type="evidence" value="ECO:0007669"/>
    <property type="project" value="UniProtKB-UniRule"/>
</dbReference>
<dbReference type="GO" id="GO:0003677">
    <property type="term" value="F:DNA binding"/>
    <property type="evidence" value="ECO:0007669"/>
    <property type="project" value="InterPro"/>
</dbReference>
<dbReference type="GO" id="GO:0009439">
    <property type="term" value="P:cyanate metabolic process"/>
    <property type="evidence" value="ECO:0007669"/>
    <property type="project" value="UniProtKB-UniRule"/>
</dbReference>
<dbReference type="CDD" id="cd00559">
    <property type="entry name" value="Cyanase_C"/>
    <property type="match status" value="1"/>
</dbReference>
<dbReference type="Gene3D" id="3.30.1160.10">
    <property type="entry name" value="Cyanate lyase, C-terminal domain"/>
    <property type="match status" value="1"/>
</dbReference>
<dbReference type="Gene3D" id="1.10.260.40">
    <property type="entry name" value="lambda repressor-like DNA-binding domains"/>
    <property type="match status" value="1"/>
</dbReference>
<dbReference type="HAMAP" id="MF_00535">
    <property type="entry name" value="Cyanate_hydrat"/>
    <property type="match status" value="1"/>
</dbReference>
<dbReference type="InterPro" id="IPR008076">
    <property type="entry name" value="Cyanase"/>
</dbReference>
<dbReference type="InterPro" id="IPR003712">
    <property type="entry name" value="Cyanate_lyase_C"/>
</dbReference>
<dbReference type="InterPro" id="IPR036581">
    <property type="entry name" value="Cyanate_lyase_C_sf"/>
</dbReference>
<dbReference type="InterPro" id="IPR048564">
    <property type="entry name" value="CYNS_N"/>
</dbReference>
<dbReference type="InterPro" id="IPR010982">
    <property type="entry name" value="Lambda_DNA-bd_dom_sf"/>
</dbReference>
<dbReference type="NCBIfam" id="TIGR00673">
    <property type="entry name" value="cynS"/>
    <property type="match status" value="1"/>
</dbReference>
<dbReference type="NCBIfam" id="NF002773">
    <property type="entry name" value="PRK02866.1"/>
    <property type="match status" value="1"/>
</dbReference>
<dbReference type="PANTHER" id="PTHR34186">
    <property type="entry name" value="CYANATE HYDRATASE"/>
    <property type="match status" value="1"/>
</dbReference>
<dbReference type="PANTHER" id="PTHR34186:SF2">
    <property type="entry name" value="CYANATE HYDRATASE"/>
    <property type="match status" value="1"/>
</dbReference>
<dbReference type="Pfam" id="PF02560">
    <property type="entry name" value="Cyanate_lyase"/>
    <property type="match status" value="1"/>
</dbReference>
<dbReference type="Pfam" id="PF21291">
    <property type="entry name" value="CYNS_N"/>
    <property type="match status" value="1"/>
</dbReference>
<dbReference type="PIRSF" id="PIRSF001263">
    <property type="entry name" value="Cyanate_hydratas"/>
    <property type="match status" value="1"/>
</dbReference>
<dbReference type="PRINTS" id="PR01693">
    <property type="entry name" value="CYANASE"/>
</dbReference>
<dbReference type="SMART" id="SM01116">
    <property type="entry name" value="Cyanate_lyase"/>
    <property type="match status" value="1"/>
</dbReference>
<dbReference type="SUPFAM" id="SSF55234">
    <property type="entry name" value="Cyanase C-terminal domain"/>
    <property type="match status" value="1"/>
</dbReference>
<dbReference type="SUPFAM" id="SSF47413">
    <property type="entry name" value="lambda repressor-like DNA-binding domains"/>
    <property type="match status" value="1"/>
</dbReference>
<evidence type="ECO:0000255" key="1">
    <source>
        <dbReference type="HAMAP-Rule" id="MF_03139"/>
    </source>
</evidence>